<keyword id="KW-0963">Cytoplasm</keyword>
<keyword id="KW-0251">Elongation factor</keyword>
<keyword id="KW-0342">GTP-binding</keyword>
<keyword id="KW-0547">Nucleotide-binding</keyword>
<keyword id="KW-0648">Protein biosynthesis</keyword>
<keyword id="KW-1185">Reference proteome</keyword>
<evidence type="ECO:0000255" key="1">
    <source>
        <dbReference type="HAMAP-Rule" id="MF_00054"/>
    </source>
</evidence>
<reference key="1">
    <citation type="journal article" date="2007" name="PLoS Biol.">
        <title>Evolution of symbiotic bacteria in the distal human intestine.</title>
        <authorList>
            <person name="Xu J."/>
            <person name="Mahowald M.A."/>
            <person name="Ley R.E."/>
            <person name="Lozupone C.A."/>
            <person name="Hamady M."/>
            <person name="Martens E.C."/>
            <person name="Henrissat B."/>
            <person name="Coutinho P.M."/>
            <person name="Minx P."/>
            <person name="Latreille P."/>
            <person name="Cordum H."/>
            <person name="Van Brunt A."/>
            <person name="Kim K."/>
            <person name="Fulton R.S."/>
            <person name="Fulton L.A."/>
            <person name="Clifton S.W."/>
            <person name="Wilson R.K."/>
            <person name="Knight R.D."/>
            <person name="Gordon J.I."/>
        </authorList>
    </citation>
    <scope>NUCLEOTIDE SEQUENCE [LARGE SCALE GENOMIC DNA]</scope>
    <source>
        <strain>ATCC 8503 / DSM 20701 / CIP 104284 / JCM 5825 / NCTC 11152</strain>
    </source>
</reference>
<comment type="function">
    <text evidence="1">Catalyzes the GTP-dependent ribosomal translocation step during translation elongation. During this step, the ribosome changes from the pre-translocational (PRE) to the post-translocational (POST) state as the newly formed A-site-bound peptidyl-tRNA and P-site-bound deacylated tRNA move to the P and E sites, respectively. Catalyzes the coordinated movement of the two tRNA molecules, the mRNA and conformational changes in the ribosome.</text>
</comment>
<comment type="subcellular location">
    <subcellularLocation>
        <location evidence="1">Cytoplasm</location>
    </subcellularLocation>
</comment>
<comment type="similarity">
    <text evidence="1">Belongs to the TRAFAC class translation factor GTPase superfamily. Classic translation factor GTPase family. EF-G/EF-2 subfamily.</text>
</comment>
<accession>A6LEJ3</accession>
<proteinExistence type="inferred from homology"/>
<organism>
    <name type="scientific">Parabacteroides distasonis (strain ATCC 8503 / DSM 20701 / CIP 104284 / JCM 5825 / NCTC 11152)</name>
    <dbReference type="NCBI Taxonomy" id="435591"/>
    <lineage>
        <taxon>Bacteria</taxon>
        <taxon>Pseudomonadati</taxon>
        <taxon>Bacteroidota</taxon>
        <taxon>Bacteroidia</taxon>
        <taxon>Bacteroidales</taxon>
        <taxon>Tannerellaceae</taxon>
        <taxon>Parabacteroides</taxon>
    </lineage>
</organism>
<feature type="chain" id="PRO_0000335851" description="Elongation factor G">
    <location>
        <begin position="1"/>
        <end position="708"/>
    </location>
</feature>
<feature type="domain" description="tr-type G">
    <location>
        <begin position="9"/>
        <end position="289"/>
    </location>
</feature>
<feature type="binding site" evidence="1">
    <location>
        <begin position="18"/>
        <end position="25"/>
    </location>
    <ligand>
        <name>GTP</name>
        <dbReference type="ChEBI" id="CHEBI:37565"/>
    </ligand>
</feature>
<feature type="binding site" evidence="1">
    <location>
        <begin position="86"/>
        <end position="90"/>
    </location>
    <ligand>
        <name>GTP</name>
        <dbReference type="ChEBI" id="CHEBI:37565"/>
    </ligand>
</feature>
<feature type="binding site" evidence="1">
    <location>
        <begin position="140"/>
        <end position="143"/>
    </location>
    <ligand>
        <name>GTP</name>
        <dbReference type="ChEBI" id="CHEBI:37565"/>
    </ligand>
</feature>
<sequence length="708" mass="78377">MANNDKQLMFTRNIGIMAHIDAGKTTTSERILFYTGLTHKIGETHDGTATMDWMAQEQERGITITSAATTTFWNYLGNRYKINLIDTPGHVDFTVEVERSLRVLDGAVATFCAVGGVEPQSETVWRQADKYNVPRIGYVNKMDRSGANYYEVVRQLKDVLGANPCPIQIPIGAEETFKGVVDLIKMKAIFWHDETMGAEYSVEEIPADLQAEAEEWRDKMLEALAECDDAIMEKYFDDPSTITEEEIMVAIRKGTLAMQINPMTCGSSFKNKGVQTLLDAVCAFLPSPEDTPAIEGTDPSDPDKIITRKPLFEEPLTALAFKIATDPYVGRLCFFRVYAGSINAGSYVLNTRSGKKERISRLFQMHSNKQNPMEVIGCGDIGAGVGFKDIRTGDTLCDENHPITLESMEFPEPVIGIAVEPKTQKDMDKLGMGLAKLAEEDPTFRVQTNEETGQTVISGMGELHLDIIIDRLRREFKVECNQGRPQVTYKEAITQPVELREVYKKQSGGRGKFADIIVRMEPADESFEGTLQFIDEVKGGNIPKEFIPSVQKGFEKAMKNGVLAGYPLDKLKVTLIDGSFHPVDSDQLSFEIAAIQAFKNASAKAGPVLMEPIMQMEVVTPEESMGDVIGDLNKRRGQVEGMETSRTGARIVKAKVPLAETFGYVTALRTITSGRATSSMQFSHYAQVSSSIAKQVLTEVQGRVDLIK</sequence>
<dbReference type="EMBL" id="CP000140">
    <property type="protein sequence ID" value="ABR44107.1"/>
    <property type="molecule type" value="Genomic_DNA"/>
</dbReference>
<dbReference type="RefSeq" id="WP_005853959.1">
    <property type="nucleotide sequence ID" value="NZ_LR215978.1"/>
</dbReference>
<dbReference type="SMR" id="A6LEJ3"/>
<dbReference type="STRING" id="435591.BDI_2382"/>
<dbReference type="PaxDb" id="435591-BDI_2382"/>
<dbReference type="KEGG" id="pdi:BDI_2382"/>
<dbReference type="eggNOG" id="COG0480">
    <property type="taxonomic scope" value="Bacteria"/>
</dbReference>
<dbReference type="HOGENOM" id="CLU_002794_4_1_10"/>
<dbReference type="BioCyc" id="PDIS435591:G1G5A-2447-MONOMER"/>
<dbReference type="Proteomes" id="UP000000566">
    <property type="component" value="Chromosome"/>
</dbReference>
<dbReference type="GO" id="GO:0005737">
    <property type="term" value="C:cytoplasm"/>
    <property type="evidence" value="ECO:0007669"/>
    <property type="project" value="UniProtKB-SubCell"/>
</dbReference>
<dbReference type="GO" id="GO:0005525">
    <property type="term" value="F:GTP binding"/>
    <property type="evidence" value="ECO:0007669"/>
    <property type="project" value="UniProtKB-UniRule"/>
</dbReference>
<dbReference type="GO" id="GO:0003924">
    <property type="term" value="F:GTPase activity"/>
    <property type="evidence" value="ECO:0007669"/>
    <property type="project" value="InterPro"/>
</dbReference>
<dbReference type="GO" id="GO:0003746">
    <property type="term" value="F:translation elongation factor activity"/>
    <property type="evidence" value="ECO:0007669"/>
    <property type="project" value="UniProtKB-UniRule"/>
</dbReference>
<dbReference type="GO" id="GO:0032790">
    <property type="term" value="P:ribosome disassembly"/>
    <property type="evidence" value="ECO:0007669"/>
    <property type="project" value="TreeGrafter"/>
</dbReference>
<dbReference type="CDD" id="cd01886">
    <property type="entry name" value="EF-G"/>
    <property type="match status" value="1"/>
</dbReference>
<dbReference type="CDD" id="cd16262">
    <property type="entry name" value="EFG_III"/>
    <property type="match status" value="1"/>
</dbReference>
<dbReference type="CDD" id="cd01434">
    <property type="entry name" value="EFG_mtEFG1_IV"/>
    <property type="match status" value="1"/>
</dbReference>
<dbReference type="CDD" id="cd03713">
    <property type="entry name" value="EFG_mtEFG_C"/>
    <property type="match status" value="1"/>
</dbReference>
<dbReference type="CDD" id="cd04088">
    <property type="entry name" value="EFG_mtEFG_II"/>
    <property type="match status" value="1"/>
</dbReference>
<dbReference type="FunFam" id="2.40.30.10:FF:000006">
    <property type="entry name" value="Elongation factor G"/>
    <property type="match status" value="1"/>
</dbReference>
<dbReference type="FunFam" id="3.30.230.10:FF:000003">
    <property type="entry name" value="Elongation factor G"/>
    <property type="match status" value="1"/>
</dbReference>
<dbReference type="FunFam" id="3.30.70.240:FF:000001">
    <property type="entry name" value="Elongation factor G"/>
    <property type="match status" value="1"/>
</dbReference>
<dbReference type="FunFam" id="3.30.70.870:FF:000001">
    <property type="entry name" value="Elongation factor G"/>
    <property type="match status" value="1"/>
</dbReference>
<dbReference type="FunFam" id="3.40.50.300:FF:000029">
    <property type="entry name" value="Elongation factor G"/>
    <property type="match status" value="1"/>
</dbReference>
<dbReference type="Gene3D" id="3.30.230.10">
    <property type="match status" value="1"/>
</dbReference>
<dbReference type="Gene3D" id="3.30.70.240">
    <property type="match status" value="1"/>
</dbReference>
<dbReference type="Gene3D" id="3.30.70.870">
    <property type="entry name" value="Elongation Factor G (Translational Gtpase), domain 3"/>
    <property type="match status" value="1"/>
</dbReference>
<dbReference type="Gene3D" id="3.40.50.300">
    <property type="entry name" value="P-loop containing nucleotide triphosphate hydrolases"/>
    <property type="match status" value="1"/>
</dbReference>
<dbReference type="Gene3D" id="2.40.30.10">
    <property type="entry name" value="Translation factors"/>
    <property type="match status" value="1"/>
</dbReference>
<dbReference type="HAMAP" id="MF_00054_B">
    <property type="entry name" value="EF_G_EF_2_B"/>
    <property type="match status" value="1"/>
</dbReference>
<dbReference type="InterPro" id="IPR041095">
    <property type="entry name" value="EFG_II"/>
</dbReference>
<dbReference type="InterPro" id="IPR009022">
    <property type="entry name" value="EFG_III"/>
</dbReference>
<dbReference type="InterPro" id="IPR035647">
    <property type="entry name" value="EFG_III/V"/>
</dbReference>
<dbReference type="InterPro" id="IPR047872">
    <property type="entry name" value="EFG_IV"/>
</dbReference>
<dbReference type="InterPro" id="IPR035649">
    <property type="entry name" value="EFG_V"/>
</dbReference>
<dbReference type="InterPro" id="IPR000640">
    <property type="entry name" value="EFG_V-like"/>
</dbReference>
<dbReference type="InterPro" id="IPR004161">
    <property type="entry name" value="EFTu-like_2"/>
</dbReference>
<dbReference type="InterPro" id="IPR031157">
    <property type="entry name" value="G_TR_CS"/>
</dbReference>
<dbReference type="InterPro" id="IPR027417">
    <property type="entry name" value="P-loop_NTPase"/>
</dbReference>
<dbReference type="InterPro" id="IPR020568">
    <property type="entry name" value="Ribosomal_Su5_D2-typ_SF"/>
</dbReference>
<dbReference type="InterPro" id="IPR014721">
    <property type="entry name" value="Ribsml_uS5_D2-typ_fold_subgr"/>
</dbReference>
<dbReference type="InterPro" id="IPR005225">
    <property type="entry name" value="Small_GTP-bd"/>
</dbReference>
<dbReference type="InterPro" id="IPR000795">
    <property type="entry name" value="T_Tr_GTP-bd_dom"/>
</dbReference>
<dbReference type="InterPro" id="IPR009000">
    <property type="entry name" value="Transl_B-barrel_sf"/>
</dbReference>
<dbReference type="InterPro" id="IPR004540">
    <property type="entry name" value="Transl_elong_EFG/EF2"/>
</dbReference>
<dbReference type="InterPro" id="IPR005517">
    <property type="entry name" value="Transl_elong_EFG/EF2_IV"/>
</dbReference>
<dbReference type="NCBIfam" id="TIGR00484">
    <property type="entry name" value="EF-G"/>
    <property type="match status" value="1"/>
</dbReference>
<dbReference type="NCBIfam" id="NF009381">
    <property type="entry name" value="PRK12740.1-5"/>
    <property type="match status" value="1"/>
</dbReference>
<dbReference type="NCBIfam" id="TIGR00231">
    <property type="entry name" value="small_GTP"/>
    <property type="match status" value="1"/>
</dbReference>
<dbReference type="PANTHER" id="PTHR43261:SF1">
    <property type="entry name" value="RIBOSOME-RELEASING FACTOR 2, MITOCHONDRIAL"/>
    <property type="match status" value="1"/>
</dbReference>
<dbReference type="PANTHER" id="PTHR43261">
    <property type="entry name" value="TRANSLATION ELONGATION FACTOR G-RELATED"/>
    <property type="match status" value="1"/>
</dbReference>
<dbReference type="Pfam" id="PF00679">
    <property type="entry name" value="EFG_C"/>
    <property type="match status" value="1"/>
</dbReference>
<dbReference type="Pfam" id="PF14492">
    <property type="entry name" value="EFG_III"/>
    <property type="match status" value="1"/>
</dbReference>
<dbReference type="Pfam" id="PF03764">
    <property type="entry name" value="EFG_IV"/>
    <property type="match status" value="1"/>
</dbReference>
<dbReference type="Pfam" id="PF00009">
    <property type="entry name" value="GTP_EFTU"/>
    <property type="match status" value="1"/>
</dbReference>
<dbReference type="Pfam" id="PF03144">
    <property type="entry name" value="GTP_EFTU_D2"/>
    <property type="match status" value="1"/>
</dbReference>
<dbReference type="PRINTS" id="PR00315">
    <property type="entry name" value="ELONGATNFCT"/>
</dbReference>
<dbReference type="SMART" id="SM00838">
    <property type="entry name" value="EFG_C"/>
    <property type="match status" value="1"/>
</dbReference>
<dbReference type="SMART" id="SM00889">
    <property type="entry name" value="EFG_IV"/>
    <property type="match status" value="1"/>
</dbReference>
<dbReference type="SUPFAM" id="SSF54980">
    <property type="entry name" value="EF-G C-terminal domain-like"/>
    <property type="match status" value="2"/>
</dbReference>
<dbReference type="SUPFAM" id="SSF52540">
    <property type="entry name" value="P-loop containing nucleoside triphosphate hydrolases"/>
    <property type="match status" value="1"/>
</dbReference>
<dbReference type="SUPFAM" id="SSF54211">
    <property type="entry name" value="Ribosomal protein S5 domain 2-like"/>
    <property type="match status" value="1"/>
</dbReference>
<dbReference type="SUPFAM" id="SSF50447">
    <property type="entry name" value="Translation proteins"/>
    <property type="match status" value="1"/>
</dbReference>
<dbReference type="PROSITE" id="PS00301">
    <property type="entry name" value="G_TR_1"/>
    <property type="match status" value="1"/>
</dbReference>
<dbReference type="PROSITE" id="PS51722">
    <property type="entry name" value="G_TR_2"/>
    <property type="match status" value="1"/>
</dbReference>
<protein>
    <recommendedName>
        <fullName evidence="1">Elongation factor G</fullName>
        <shortName evidence="1">EF-G</shortName>
    </recommendedName>
</protein>
<name>EFG_PARD8</name>
<gene>
    <name evidence="1" type="primary">fusA</name>
    <name type="ordered locus">BDI_2382</name>
</gene>